<gene>
    <name evidence="4" type="primary">ALKBH9B</name>
    <name evidence="6" type="ordered locus">At2g17970</name>
</gene>
<accession>Q9SL49</accession>
<keyword id="KW-0963">Cytoplasm</keyword>
<keyword id="KW-0223">Dioxygenase</keyword>
<keyword id="KW-0945">Host-virus interaction</keyword>
<keyword id="KW-0408">Iron</keyword>
<keyword id="KW-0479">Metal-binding</keyword>
<keyword id="KW-0560">Oxidoreductase</keyword>
<keyword id="KW-1185">Reference proteome</keyword>
<dbReference type="EC" id="1.14.11.53" evidence="3"/>
<dbReference type="EMBL" id="AC006201">
    <property type="protein sequence ID" value="AAD20129.1"/>
    <property type="molecule type" value="Genomic_DNA"/>
</dbReference>
<dbReference type="EMBL" id="CP002685">
    <property type="protein sequence ID" value="AEC06706.1"/>
    <property type="molecule type" value="Genomic_DNA"/>
</dbReference>
<dbReference type="EMBL" id="BT010563">
    <property type="protein sequence ID" value="AAQ65186.1"/>
    <property type="molecule type" value="mRNA"/>
</dbReference>
<dbReference type="EMBL" id="AK175991">
    <property type="protein sequence ID" value="BAD43754.1"/>
    <property type="molecule type" value="mRNA"/>
</dbReference>
<dbReference type="PIR" id="F84558">
    <property type="entry name" value="F84558"/>
</dbReference>
<dbReference type="PIR" id="T00828">
    <property type="entry name" value="T00828"/>
</dbReference>
<dbReference type="RefSeq" id="NP_179387.1">
    <property type="nucleotide sequence ID" value="NM_127351.3"/>
</dbReference>
<dbReference type="SMR" id="Q9SL49"/>
<dbReference type="FunCoup" id="Q9SL49">
    <property type="interactions" value="868"/>
</dbReference>
<dbReference type="STRING" id="3702.Q9SL49"/>
<dbReference type="iPTMnet" id="Q9SL49"/>
<dbReference type="PaxDb" id="3702-AT2G17970.1"/>
<dbReference type="EnsemblPlants" id="AT2G17970.1">
    <property type="protein sequence ID" value="AT2G17970.1"/>
    <property type="gene ID" value="AT2G17970"/>
</dbReference>
<dbReference type="GeneID" id="816307"/>
<dbReference type="Gramene" id="AT2G17970.1">
    <property type="protein sequence ID" value="AT2G17970.1"/>
    <property type="gene ID" value="AT2G17970"/>
</dbReference>
<dbReference type="KEGG" id="ath:AT2G17970"/>
<dbReference type="Araport" id="AT2G17970"/>
<dbReference type="TAIR" id="AT2G17970">
    <property type="gene designation" value="ALKBH9B"/>
</dbReference>
<dbReference type="eggNOG" id="KOG4176">
    <property type="taxonomic scope" value="Eukaryota"/>
</dbReference>
<dbReference type="InParanoid" id="Q9SL49"/>
<dbReference type="PhylomeDB" id="Q9SL49"/>
<dbReference type="CD-CODE" id="60F64496">
    <property type="entry name" value="P-body"/>
</dbReference>
<dbReference type="CD-CODE" id="A9BEEE91">
    <property type="entry name" value="Sirna body"/>
</dbReference>
<dbReference type="PRO" id="PR:Q9SL49"/>
<dbReference type="Proteomes" id="UP000006548">
    <property type="component" value="Chromosome 2"/>
</dbReference>
<dbReference type="ExpressionAtlas" id="Q9SL49">
    <property type="expression patterns" value="baseline and differential"/>
</dbReference>
<dbReference type="GO" id="GO:0000932">
    <property type="term" value="C:P-body"/>
    <property type="evidence" value="ECO:0000314"/>
    <property type="project" value="UniProtKB"/>
</dbReference>
<dbReference type="GO" id="GO:0009506">
    <property type="term" value="C:plasmodesma"/>
    <property type="evidence" value="ECO:0007005"/>
    <property type="project" value="TAIR"/>
</dbReference>
<dbReference type="GO" id="GO:0032451">
    <property type="term" value="F:demethylase activity"/>
    <property type="evidence" value="ECO:0000314"/>
    <property type="project" value="UniProtKB"/>
</dbReference>
<dbReference type="GO" id="GO:0046872">
    <property type="term" value="F:metal ion binding"/>
    <property type="evidence" value="ECO:0007669"/>
    <property type="project" value="UniProtKB-KW"/>
</dbReference>
<dbReference type="GO" id="GO:0003729">
    <property type="term" value="F:mRNA binding"/>
    <property type="evidence" value="ECO:0000314"/>
    <property type="project" value="UniProtKB"/>
</dbReference>
<dbReference type="GO" id="GO:1990931">
    <property type="term" value="F:mRNA N6-methyladenosine dioxygenase activity"/>
    <property type="evidence" value="ECO:0007669"/>
    <property type="project" value="RHEA"/>
</dbReference>
<dbReference type="GO" id="GO:0070988">
    <property type="term" value="P:demethylation"/>
    <property type="evidence" value="ECO:0000314"/>
    <property type="project" value="UniProtKB"/>
</dbReference>
<dbReference type="GO" id="GO:0006402">
    <property type="term" value="P:mRNA catabolic process"/>
    <property type="evidence" value="ECO:0000315"/>
    <property type="project" value="UniProtKB"/>
</dbReference>
<dbReference type="FunFam" id="2.60.120.590:FF:000017">
    <property type="entry name" value="RNA demethylase ALKBH9B"/>
    <property type="match status" value="1"/>
</dbReference>
<dbReference type="Gene3D" id="2.60.120.590">
    <property type="entry name" value="Alpha-ketoglutarate-dependent dioxygenase AlkB-like"/>
    <property type="match status" value="1"/>
</dbReference>
<dbReference type="InterPro" id="IPR027450">
    <property type="entry name" value="AlkB-like"/>
</dbReference>
<dbReference type="InterPro" id="IPR037151">
    <property type="entry name" value="AlkB-like_sf"/>
</dbReference>
<dbReference type="InterPro" id="IPR044842">
    <property type="entry name" value="ALKBH9B/ALKBH10B-like"/>
</dbReference>
<dbReference type="InterPro" id="IPR005123">
    <property type="entry name" value="Oxoglu/Fe-dep_dioxygenase_dom"/>
</dbReference>
<dbReference type="PANTHER" id="PTHR31447">
    <property type="entry name" value="HYDROXYPROLINE-RICH GLYCOPROTEIN FAMILY PROTEIN-RELATED"/>
    <property type="match status" value="1"/>
</dbReference>
<dbReference type="PANTHER" id="PTHR31447:SF18">
    <property type="entry name" value="RNA DEMETHYLASE ALKBH9B"/>
    <property type="match status" value="1"/>
</dbReference>
<dbReference type="Pfam" id="PF13532">
    <property type="entry name" value="2OG-FeII_Oxy_2"/>
    <property type="match status" value="1"/>
</dbReference>
<dbReference type="SUPFAM" id="SSF51197">
    <property type="entry name" value="Clavaminate synthase-like"/>
    <property type="match status" value="1"/>
</dbReference>
<dbReference type="PROSITE" id="PS51471">
    <property type="entry name" value="FE2OG_OXY"/>
    <property type="match status" value="1"/>
</dbReference>
<comment type="function">
    <text evidence="3">Dioxygenase that demethylates RNA by oxidative demethylation: specifically demethylates N(6)-methyladenosine (m6A) RNA, the most prevalent internal modification of messenger RNA (mRNA) in higher eukaryotes (PubMed:28923956). Modulates viral infection of the alfalfa mosaic virus (AMV) and the m6A abundance in its genomic RNAs (PubMed:28923956).</text>
</comment>
<comment type="catalytic activity">
    <reaction evidence="3">
        <text>an N(6)-methyladenosine in mRNA + 2-oxoglutarate + O2 = an adenosine in mRNA + formaldehyde + succinate + CO2</text>
        <dbReference type="Rhea" id="RHEA:49520"/>
        <dbReference type="Rhea" id="RHEA-COMP:12414"/>
        <dbReference type="Rhea" id="RHEA-COMP:12417"/>
        <dbReference type="ChEBI" id="CHEBI:15379"/>
        <dbReference type="ChEBI" id="CHEBI:16526"/>
        <dbReference type="ChEBI" id="CHEBI:16810"/>
        <dbReference type="ChEBI" id="CHEBI:16842"/>
        <dbReference type="ChEBI" id="CHEBI:30031"/>
        <dbReference type="ChEBI" id="CHEBI:74411"/>
        <dbReference type="ChEBI" id="CHEBI:74449"/>
        <dbReference type="EC" id="1.14.11.53"/>
    </reaction>
</comment>
<comment type="cofactor">
    <cofactor evidence="1">
        <name>Fe(2+)</name>
        <dbReference type="ChEBI" id="CHEBI:29033"/>
    </cofactor>
    <text evidence="1">Binds 1 Fe(2+) ion per subunit.</text>
</comment>
<comment type="subunit">
    <text evidence="3">(Microbial infection) Interacts with the capsid protein ORF3b of the alfalfa mosaic virus (AMV).</text>
</comment>
<comment type="subcellular location">
    <subcellularLocation>
        <location evidence="3">Cytoplasm</location>
        <location evidence="3">P-body</location>
    </subcellularLocation>
    <subcellularLocation>
        <location evidence="3">Cytoplasmic granule</location>
    </subcellularLocation>
</comment>
<comment type="similarity">
    <text evidence="5">Belongs to the alkB family.</text>
</comment>
<organism>
    <name type="scientific">Arabidopsis thaliana</name>
    <name type="common">Mouse-ear cress</name>
    <dbReference type="NCBI Taxonomy" id="3702"/>
    <lineage>
        <taxon>Eukaryota</taxon>
        <taxon>Viridiplantae</taxon>
        <taxon>Streptophyta</taxon>
        <taxon>Embryophyta</taxon>
        <taxon>Tracheophyta</taxon>
        <taxon>Spermatophyta</taxon>
        <taxon>Magnoliopsida</taxon>
        <taxon>eudicotyledons</taxon>
        <taxon>Gunneridae</taxon>
        <taxon>Pentapetalae</taxon>
        <taxon>rosids</taxon>
        <taxon>malvids</taxon>
        <taxon>Brassicales</taxon>
        <taxon>Brassicaceae</taxon>
        <taxon>Camelineae</taxon>
        <taxon>Arabidopsis</taxon>
    </lineage>
</organism>
<proteinExistence type="evidence at protein level"/>
<feature type="chain" id="PRO_0000445522" description="RNA demethylase ALKBH9B">
    <location>
        <begin position="1"/>
        <end position="507"/>
    </location>
</feature>
<feature type="domain" description="Fe2OG dioxygenase" evidence="1">
    <location>
        <begin position="317"/>
        <end position="414"/>
    </location>
</feature>
<feature type="region of interest" description="Disordered" evidence="2">
    <location>
        <begin position="76"/>
        <end position="102"/>
    </location>
</feature>
<feature type="region of interest" description="Disordered" evidence="2">
    <location>
        <begin position="145"/>
        <end position="183"/>
    </location>
</feature>
<feature type="region of interest" description="Disordered" evidence="2">
    <location>
        <begin position="432"/>
        <end position="507"/>
    </location>
</feature>
<feature type="compositionally biased region" description="Basic and acidic residues" evidence="2">
    <location>
        <begin position="89"/>
        <end position="100"/>
    </location>
</feature>
<feature type="compositionally biased region" description="Acidic residues" evidence="2">
    <location>
        <begin position="145"/>
        <end position="160"/>
    </location>
</feature>
<feature type="compositionally biased region" description="Basic and acidic residues" evidence="2">
    <location>
        <begin position="174"/>
        <end position="183"/>
    </location>
</feature>
<feature type="compositionally biased region" description="Polar residues" evidence="2">
    <location>
        <begin position="440"/>
        <end position="450"/>
    </location>
</feature>
<feature type="compositionally biased region" description="Basic residues" evidence="2">
    <location>
        <begin position="497"/>
        <end position="507"/>
    </location>
</feature>
<feature type="binding site" evidence="1">
    <location>
        <position position="335"/>
    </location>
    <ligand>
        <name>Fe cation</name>
        <dbReference type="ChEBI" id="CHEBI:24875"/>
    </ligand>
</feature>
<feature type="binding site" evidence="1">
    <location>
        <position position="337"/>
    </location>
    <ligand>
        <name>Fe cation</name>
        <dbReference type="ChEBI" id="CHEBI:24875"/>
    </ligand>
</feature>
<feature type="binding site" evidence="1">
    <location>
        <position position="396"/>
    </location>
    <ligand>
        <name>Fe cation</name>
        <dbReference type="ChEBI" id="CHEBI:24875"/>
    </ligand>
</feature>
<feature type="binding site" evidence="1">
    <location>
        <position position="405"/>
    </location>
    <ligand>
        <name>2-oxoglutarate</name>
        <dbReference type="ChEBI" id="CHEBI:16810"/>
    </ligand>
</feature>
<sequence>MENDPFLRQYQPSELKIASEFLTNWLPFLSKDLCKDCNHLLSNRIRSLDPAHCSNNTDKVDGECKTGSCSVVENMGSERASNNVDDNYDEKSENGEDCDNHSLGSWKGSEIVFGSFPEDFSSVLQSRPAVVETASPRMRWADMAQEDEFDEEEEEEEEERDSSRKGFDASSMKTPEKPKLSRDQRENLRLINVKRKKDFICLERVKGKIVNVLDGLELHTGVFSAVEQKRIVDQVYQLQEKGRRGELKKRTFTAPHKWMRGKGRETIQFGCCYNYAPDRAGNPPGILQREEVDPLPHLFKVIIRKLIKWHVLPPTCVPDSCIVNIYDEGDCIPPHIDNHDFLRPFCTISFLSECDILFGSNLKVEGPGDFSGSYSIPLPVGSVLVLNGNGADVAKHCVPAVPTKRISITFRKMDESKRPVWFTPEPDLQGIEPLPLDLNRSGSTSRFSRLNNHNGTNQRGHGRRGGGNGYDSRGYYNPERSSEHNDSGDWPSSQRRGMPRPSRRNYG</sequence>
<reference key="1">
    <citation type="journal article" date="1999" name="Nature">
        <title>Sequence and analysis of chromosome 2 of the plant Arabidopsis thaliana.</title>
        <authorList>
            <person name="Lin X."/>
            <person name="Kaul S."/>
            <person name="Rounsley S.D."/>
            <person name="Shea T.P."/>
            <person name="Benito M.-I."/>
            <person name="Town C.D."/>
            <person name="Fujii C.Y."/>
            <person name="Mason T.M."/>
            <person name="Bowman C.L."/>
            <person name="Barnstead M.E."/>
            <person name="Feldblyum T.V."/>
            <person name="Buell C.R."/>
            <person name="Ketchum K.A."/>
            <person name="Lee J.J."/>
            <person name="Ronning C.M."/>
            <person name="Koo H.L."/>
            <person name="Moffat K.S."/>
            <person name="Cronin L.A."/>
            <person name="Shen M."/>
            <person name="Pai G."/>
            <person name="Van Aken S."/>
            <person name="Umayam L."/>
            <person name="Tallon L.J."/>
            <person name="Gill J.E."/>
            <person name="Adams M.D."/>
            <person name="Carrera A.J."/>
            <person name="Creasy T.H."/>
            <person name="Goodman H.M."/>
            <person name="Somerville C.R."/>
            <person name="Copenhaver G.P."/>
            <person name="Preuss D."/>
            <person name="Nierman W.C."/>
            <person name="White O."/>
            <person name="Eisen J.A."/>
            <person name="Salzberg S.L."/>
            <person name="Fraser C.M."/>
            <person name="Venter J.C."/>
        </authorList>
    </citation>
    <scope>NUCLEOTIDE SEQUENCE [LARGE SCALE GENOMIC DNA]</scope>
    <source>
        <strain>cv. Columbia</strain>
    </source>
</reference>
<reference key="2">
    <citation type="journal article" date="2017" name="Plant J.">
        <title>Araport11: a complete reannotation of the Arabidopsis thaliana reference genome.</title>
        <authorList>
            <person name="Cheng C.Y."/>
            <person name="Krishnakumar V."/>
            <person name="Chan A.P."/>
            <person name="Thibaud-Nissen F."/>
            <person name="Schobel S."/>
            <person name="Town C.D."/>
        </authorList>
    </citation>
    <scope>GENOME REANNOTATION</scope>
    <source>
        <strain>cv. Columbia</strain>
    </source>
</reference>
<reference key="3">
    <citation type="journal article" date="2003" name="Science">
        <title>Empirical analysis of transcriptional activity in the Arabidopsis genome.</title>
        <authorList>
            <person name="Yamada K."/>
            <person name="Lim J."/>
            <person name="Dale J.M."/>
            <person name="Chen H."/>
            <person name="Shinn P."/>
            <person name="Palm C.J."/>
            <person name="Southwick A.M."/>
            <person name="Wu H.C."/>
            <person name="Kim C.J."/>
            <person name="Nguyen M."/>
            <person name="Pham P.K."/>
            <person name="Cheuk R.F."/>
            <person name="Karlin-Newmann G."/>
            <person name="Liu S.X."/>
            <person name="Lam B."/>
            <person name="Sakano H."/>
            <person name="Wu T."/>
            <person name="Yu G."/>
            <person name="Miranda M."/>
            <person name="Quach H.L."/>
            <person name="Tripp M."/>
            <person name="Chang C.H."/>
            <person name="Lee J.M."/>
            <person name="Toriumi M.J."/>
            <person name="Chan M.M."/>
            <person name="Tang C.C."/>
            <person name="Onodera C.S."/>
            <person name="Deng J.M."/>
            <person name="Akiyama K."/>
            <person name="Ansari Y."/>
            <person name="Arakawa T."/>
            <person name="Banh J."/>
            <person name="Banno F."/>
            <person name="Bowser L."/>
            <person name="Brooks S.Y."/>
            <person name="Carninci P."/>
            <person name="Chao Q."/>
            <person name="Choy N."/>
            <person name="Enju A."/>
            <person name="Goldsmith A.D."/>
            <person name="Gurjal M."/>
            <person name="Hansen N.F."/>
            <person name="Hayashizaki Y."/>
            <person name="Johnson-Hopson C."/>
            <person name="Hsuan V.W."/>
            <person name="Iida K."/>
            <person name="Karnes M."/>
            <person name="Khan S."/>
            <person name="Koesema E."/>
            <person name="Ishida J."/>
            <person name="Jiang P.X."/>
            <person name="Jones T."/>
            <person name="Kawai J."/>
            <person name="Kamiya A."/>
            <person name="Meyers C."/>
            <person name="Nakajima M."/>
            <person name="Narusaka M."/>
            <person name="Seki M."/>
            <person name="Sakurai T."/>
            <person name="Satou M."/>
            <person name="Tamse R."/>
            <person name="Vaysberg M."/>
            <person name="Wallender E.K."/>
            <person name="Wong C."/>
            <person name="Yamamura Y."/>
            <person name="Yuan S."/>
            <person name="Shinozaki K."/>
            <person name="Davis R.W."/>
            <person name="Theologis A."/>
            <person name="Ecker J.R."/>
        </authorList>
    </citation>
    <scope>NUCLEOTIDE SEQUENCE [LARGE SCALE MRNA]</scope>
    <source>
        <strain>cv. Columbia</strain>
    </source>
</reference>
<reference key="4">
    <citation type="submission" date="2004-09" db="EMBL/GenBank/DDBJ databases">
        <title>Large-scale analysis of RIKEN Arabidopsis full-length (RAFL) cDNAs.</title>
        <authorList>
            <person name="Totoki Y."/>
            <person name="Seki M."/>
            <person name="Ishida J."/>
            <person name="Nakajima M."/>
            <person name="Enju A."/>
            <person name="Kamiya A."/>
            <person name="Narusaka M."/>
            <person name="Shin-i T."/>
            <person name="Nakagawa M."/>
            <person name="Sakamoto N."/>
            <person name="Oishi K."/>
            <person name="Kohara Y."/>
            <person name="Kobayashi M."/>
            <person name="Toyoda A."/>
            <person name="Sakaki Y."/>
            <person name="Sakurai T."/>
            <person name="Iida K."/>
            <person name="Akiyama K."/>
            <person name="Satou M."/>
            <person name="Toyoda T."/>
            <person name="Konagaya A."/>
            <person name="Carninci P."/>
            <person name="Kawai J."/>
            <person name="Hayashizaki Y."/>
            <person name="Shinozaki K."/>
        </authorList>
    </citation>
    <scope>NUCLEOTIDE SEQUENCE [LARGE SCALE MRNA]</scope>
    <source>
        <strain>cv. Columbia</strain>
    </source>
</reference>
<reference key="5">
    <citation type="journal article" date="2017" name="Proc. Natl. Acad. Sci. U.S.A.">
        <title>Arabidopsis m6A demethylase activity modulates viral infection of a plant virus and the m6A abundance in its genomic RNAs.</title>
        <authorList>
            <person name="Martinez-Perez M."/>
            <person name="Aparicio F."/>
            <person name="Lopez-Gresa M.P."/>
            <person name="Belles J.M."/>
            <person name="Sanchez-Navarro J.A."/>
            <person name="Pallas V."/>
        </authorList>
    </citation>
    <scope>FUNCTION</scope>
    <scope>CATALYTIC ACTIVITY</scope>
    <scope>COFACTOR</scope>
    <scope>INTERACTION WITH THE COAT PROTEIN OF ALFALFA MOSAIC VIRUS</scope>
    <scope>SUBCELLULAR LOCATION</scope>
</reference>
<protein>
    <recommendedName>
        <fullName evidence="5">RNA demethylase ALKBH9B</fullName>
        <shortName evidence="4">AtALKBH9B</shortName>
        <ecNumber evidence="3">1.14.11.53</ecNumber>
    </recommendedName>
    <alternativeName>
        <fullName evidence="5">Alkylated DNA repair protein alkB homolog 9B</fullName>
    </alternativeName>
    <alternativeName>
        <fullName evidence="5">Alpha-ketoglutarate-dependent dioxygenase alkB homolog 9B</fullName>
    </alternativeName>
</protein>
<name>AKB9B_ARATH</name>
<evidence type="ECO:0000255" key="1">
    <source>
        <dbReference type="PROSITE-ProRule" id="PRU00805"/>
    </source>
</evidence>
<evidence type="ECO:0000256" key="2">
    <source>
        <dbReference type="SAM" id="MobiDB-lite"/>
    </source>
</evidence>
<evidence type="ECO:0000269" key="3">
    <source>
    </source>
</evidence>
<evidence type="ECO:0000303" key="4">
    <source>
    </source>
</evidence>
<evidence type="ECO:0000305" key="5"/>
<evidence type="ECO:0000312" key="6">
    <source>
        <dbReference type="Araport" id="AT2G17970"/>
    </source>
</evidence>